<keyword id="KW-0732">Signal</keyword>
<proteinExistence type="inferred from homology"/>
<dbReference type="EMBL" id="CP000247">
    <property type="protein sequence ID" value="ABG69773.1"/>
    <property type="molecule type" value="Genomic_DNA"/>
</dbReference>
<dbReference type="RefSeq" id="WP_001211011.1">
    <property type="nucleotide sequence ID" value="NC_008253.1"/>
</dbReference>
<dbReference type="KEGG" id="ecp:ECP_1770"/>
<dbReference type="HOGENOM" id="CLU_179882_0_0_6"/>
<dbReference type="Proteomes" id="UP000009182">
    <property type="component" value="Chromosome"/>
</dbReference>
<dbReference type="InterPro" id="IPR025611">
    <property type="entry name" value="YobH"/>
</dbReference>
<dbReference type="Pfam" id="PF13996">
    <property type="entry name" value="YobH"/>
    <property type="match status" value="1"/>
</dbReference>
<name>YOBH_ECOL5</name>
<feature type="signal peptide" evidence="1">
    <location>
        <begin position="1"/>
        <end position="33"/>
    </location>
</feature>
<feature type="chain" id="PRO_0000259707" description="Uncharacterized protein YobH">
    <location>
        <begin position="34"/>
        <end position="79"/>
    </location>
</feature>
<sequence>MRFIIRTVMLIALVWIGLLLSGYGVLIGSKENAAGLGLQCTYLTARGTSTVQYLHTKSGFLGITDCPLLRKSNIVVDNG</sequence>
<gene>
    <name type="primary">yobH</name>
    <name type="ordered locus">ECP_1770</name>
</gene>
<evidence type="ECO:0000255" key="1"/>
<organism>
    <name type="scientific">Escherichia coli O6:K15:H31 (strain 536 / UPEC)</name>
    <dbReference type="NCBI Taxonomy" id="362663"/>
    <lineage>
        <taxon>Bacteria</taxon>
        <taxon>Pseudomonadati</taxon>
        <taxon>Pseudomonadota</taxon>
        <taxon>Gammaproteobacteria</taxon>
        <taxon>Enterobacterales</taxon>
        <taxon>Enterobacteriaceae</taxon>
        <taxon>Escherichia</taxon>
    </lineage>
</organism>
<reference key="1">
    <citation type="journal article" date="2006" name="Mol. Microbiol.">
        <title>Role of pathogenicity island-associated integrases in the genome plasticity of uropathogenic Escherichia coli strain 536.</title>
        <authorList>
            <person name="Hochhut B."/>
            <person name="Wilde C."/>
            <person name="Balling G."/>
            <person name="Middendorf B."/>
            <person name="Dobrindt U."/>
            <person name="Brzuszkiewicz E."/>
            <person name="Gottschalk G."/>
            <person name="Carniel E."/>
            <person name="Hacker J."/>
        </authorList>
    </citation>
    <scope>NUCLEOTIDE SEQUENCE [LARGE SCALE GENOMIC DNA]</scope>
    <source>
        <strain>536 / UPEC</strain>
    </source>
</reference>
<accession>Q0TH06</accession>
<protein>
    <recommendedName>
        <fullName>Uncharacterized protein YobH</fullName>
    </recommendedName>
</protein>